<name>ARO10_YEAST</name>
<protein>
    <recommendedName>
        <fullName>Transaminated amino acid decarboxylase</fullName>
        <ecNumber evidence="8">4.1.1.-</ecNumber>
        <ecNumber evidence="4 9">4.1.1.43</ecNumber>
        <ecNumber evidence="3 4">4.1.1.72</ecNumber>
        <ecNumber evidence="4 9">4.1.1.74</ecNumber>
        <ecNumber evidence="9">4.1.1.80</ecNumber>
    </recommendedName>
    <alternativeName>
        <fullName evidence="11">Thiamine diphosphate-dependent phenylpyruvate decarboxylase</fullName>
        <shortName evidence="11">PPDC</shortName>
    </alternativeName>
    <alternativeName>
        <fullName>Thiamine pyrophosphate-dependent 2-oxo-acid decarboxylase</fullName>
        <shortName>2ODC</shortName>
    </alternativeName>
    <alternativeName>
        <fullName>Transaminated branched-chain amino acid decarboxylase</fullName>
    </alternativeName>
</protein>
<dbReference type="EC" id="4.1.1.-" evidence="8"/>
<dbReference type="EC" id="4.1.1.43" evidence="4 9"/>
<dbReference type="EC" id="4.1.1.72" evidence="3 4"/>
<dbReference type="EC" id="4.1.1.74" evidence="4 9"/>
<dbReference type="EC" id="4.1.1.80" evidence="9"/>
<dbReference type="EMBL" id="U28373">
    <property type="protein sequence ID" value="AAB64816.1"/>
    <property type="molecule type" value="Genomic_DNA"/>
</dbReference>
<dbReference type="EMBL" id="BK006938">
    <property type="protein sequence ID" value="DAA12223.1"/>
    <property type="molecule type" value="Genomic_DNA"/>
</dbReference>
<dbReference type="PIR" id="S61175">
    <property type="entry name" value="S61175"/>
</dbReference>
<dbReference type="RefSeq" id="NP_010668.3">
    <property type="nucleotide sequence ID" value="NM_001180688.3"/>
</dbReference>
<dbReference type="SMR" id="Q06408"/>
<dbReference type="BioGRID" id="32440">
    <property type="interactions" value="52"/>
</dbReference>
<dbReference type="DIP" id="DIP-5252N"/>
<dbReference type="FunCoup" id="Q06408">
    <property type="interactions" value="87"/>
</dbReference>
<dbReference type="IntAct" id="Q06408">
    <property type="interactions" value="5"/>
</dbReference>
<dbReference type="MINT" id="Q06408"/>
<dbReference type="STRING" id="4932.YDR380W"/>
<dbReference type="iPTMnet" id="Q06408"/>
<dbReference type="PaxDb" id="4932-YDR380W"/>
<dbReference type="PeptideAtlas" id="Q06408"/>
<dbReference type="EnsemblFungi" id="YDR380W_mRNA">
    <property type="protein sequence ID" value="YDR380W"/>
    <property type="gene ID" value="YDR380W"/>
</dbReference>
<dbReference type="GeneID" id="851987"/>
<dbReference type="KEGG" id="sce:YDR380W"/>
<dbReference type="AGR" id="SGD:S000002788"/>
<dbReference type="SGD" id="S000002788">
    <property type="gene designation" value="ARO10"/>
</dbReference>
<dbReference type="VEuPathDB" id="FungiDB:YDR380W"/>
<dbReference type="eggNOG" id="KOG1184">
    <property type="taxonomic scope" value="Eukaryota"/>
</dbReference>
<dbReference type="HOGENOM" id="CLU_013748_0_2_1"/>
<dbReference type="InParanoid" id="Q06408"/>
<dbReference type="OMA" id="AQEISVM"/>
<dbReference type="OrthoDB" id="308383at2759"/>
<dbReference type="BioCyc" id="MetaCyc:MONOMER3O-398"/>
<dbReference type="BioCyc" id="YEAST:MONOMER3O-398"/>
<dbReference type="BRENDA" id="4.1.1.43">
    <property type="organism ID" value="984"/>
</dbReference>
<dbReference type="UniPathway" id="UPA00866"/>
<dbReference type="BioGRID-ORCS" id="851987">
    <property type="hits" value="1 hit in 10 CRISPR screens"/>
</dbReference>
<dbReference type="PRO" id="PR:Q06408"/>
<dbReference type="Proteomes" id="UP000002311">
    <property type="component" value="Chromosome IV"/>
</dbReference>
<dbReference type="RNAct" id="Q06408">
    <property type="molecule type" value="protein"/>
</dbReference>
<dbReference type="GO" id="GO:0005737">
    <property type="term" value="C:cytoplasm"/>
    <property type="evidence" value="ECO:0007005"/>
    <property type="project" value="SGD"/>
</dbReference>
<dbReference type="GO" id="GO:0005829">
    <property type="term" value="C:cytosol"/>
    <property type="evidence" value="ECO:0007005"/>
    <property type="project" value="SGD"/>
</dbReference>
<dbReference type="GO" id="GO:0005634">
    <property type="term" value="C:nucleus"/>
    <property type="evidence" value="ECO:0000318"/>
    <property type="project" value="GO_Central"/>
</dbReference>
<dbReference type="GO" id="GO:0050546">
    <property type="term" value="F:4-hydroxyphenylpyruvate decarboxylase activity"/>
    <property type="evidence" value="ECO:0007669"/>
    <property type="project" value="UniProtKB-EC"/>
</dbReference>
<dbReference type="GO" id="GO:0047433">
    <property type="term" value="F:branched-chain-2-oxoacid decarboxylase activity"/>
    <property type="evidence" value="ECO:0007669"/>
    <property type="project" value="UniProtKB-EC"/>
</dbReference>
<dbReference type="GO" id="GO:0016831">
    <property type="term" value="F:carboxy-lyase activity"/>
    <property type="evidence" value="ECO:0000315"/>
    <property type="project" value="SGD"/>
</dbReference>
<dbReference type="GO" id="GO:0047434">
    <property type="term" value="F:indolepyruvate decarboxylase activity"/>
    <property type="evidence" value="ECO:0007669"/>
    <property type="project" value="UniProtKB-EC"/>
</dbReference>
<dbReference type="GO" id="GO:0000287">
    <property type="term" value="F:magnesium ion binding"/>
    <property type="evidence" value="ECO:0007669"/>
    <property type="project" value="InterPro"/>
</dbReference>
<dbReference type="GO" id="GO:0050177">
    <property type="term" value="F:phenylpyruvate decarboxylase activity"/>
    <property type="evidence" value="ECO:0000314"/>
    <property type="project" value="SGD"/>
</dbReference>
<dbReference type="GO" id="GO:0004737">
    <property type="term" value="F:pyruvate decarboxylase activity"/>
    <property type="evidence" value="ECO:0000318"/>
    <property type="project" value="GO_Central"/>
</dbReference>
<dbReference type="GO" id="GO:0030976">
    <property type="term" value="F:thiamine pyrophosphate binding"/>
    <property type="evidence" value="ECO:0007669"/>
    <property type="project" value="InterPro"/>
</dbReference>
<dbReference type="GO" id="GO:0000949">
    <property type="term" value="P:aromatic amino acid family catabolic process to alcohol via Ehrlich pathway"/>
    <property type="evidence" value="ECO:0000316"/>
    <property type="project" value="SGD"/>
</dbReference>
<dbReference type="GO" id="GO:0000950">
    <property type="term" value="P:branched-chain amino acid catabolic process to alcohol via Ehrlich pathway"/>
    <property type="evidence" value="ECO:0000316"/>
    <property type="project" value="SGD"/>
</dbReference>
<dbReference type="GO" id="GO:0006552">
    <property type="term" value="P:L-leucine catabolic process"/>
    <property type="evidence" value="ECO:0000315"/>
    <property type="project" value="SGD"/>
</dbReference>
<dbReference type="GO" id="GO:0006559">
    <property type="term" value="P:L-phenylalanine catabolic process"/>
    <property type="evidence" value="ECO:0000314"/>
    <property type="project" value="SGD"/>
</dbReference>
<dbReference type="GO" id="GO:0006569">
    <property type="term" value="P:L-tryptophan catabolic process"/>
    <property type="evidence" value="ECO:0000316"/>
    <property type="project" value="SGD"/>
</dbReference>
<dbReference type="GO" id="GO:0000951">
    <property type="term" value="P:methionine catabolic process to 3-methylthiopropanol"/>
    <property type="evidence" value="ECO:0000315"/>
    <property type="project" value="SGD"/>
</dbReference>
<dbReference type="GO" id="GO:0006572">
    <property type="term" value="P:tyrosine catabolic process"/>
    <property type="evidence" value="ECO:0007669"/>
    <property type="project" value="UniProtKB-KW"/>
</dbReference>
<dbReference type="CDD" id="cd02005">
    <property type="entry name" value="TPP_PDC_IPDC"/>
    <property type="match status" value="1"/>
</dbReference>
<dbReference type="CDD" id="cd07038">
    <property type="entry name" value="TPP_PYR_PDC_IPDC_like"/>
    <property type="match status" value="1"/>
</dbReference>
<dbReference type="FunFam" id="3.40.50.970:FF:000019">
    <property type="entry name" value="Pyruvate decarboxylase isozyme"/>
    <property type="match status" value="1"/>
</dbReference>
<dbReference type="FunFam" id="3.40.50.970:FF:000024">
    <property type="entry name" value="Pyruvate decarboxylase isozyme"/>
    <property type="match status" value="1"/>
</dbReference>
<dbReference type="Gene3D" id="3.40.50.970">
    <property type="match status" value="2"/>
</dbReference>
<dbReference type="Gene3D" id="3.40.50.1220">
    <property type="entry name" value="TPP-binding domain"/>
    <property type="match status" value="1"/>
</dbReference>
<dbReference type="InterPro" id="IPR029035">
    <property type="entry name" value="DHS-like_NAD/FAD-binding_dom"/>
</dbReference>
<dbReference type="InterPro" id="IPR012110">
    <property type="entry name" value="PDC/IPDC-like"/>
</dbReference>
<dbReference type="InterPro" id="IPR029061">
    <property type="entry name" value="THDP-binding"/>
</dbReference>
<dbReference type="InterPro" id="IPR012000">
    <property type="entry name" value="Thiamin_PyroP_enz_cen_dom"/>
</dbReference>
<dbReference type="InterPro" id="IPR012001">
    <property type="entry name" value="Thiamin_PyroP_enz_TPP-bd_dom"/>
</dbReference>
<dbReference type="InterPro" id="IPR011766">
    <property type="entry name" value="TPP_enzyme_TPP-bd"/>
</dbReference>
<dbReference type="InterPro" id="IPR047214">
    <property type="entry name" value="TPP_PDC_IPDC"/>
</dbReference>
<dbReference type="InterPro" id="IPR047213">
    <property type="entry name" value="TPP_PYR_PDC_IPDC-like"/>
</dbReference>
<dbReference type="PANTHER" id="PTHR43452">
    <property type="entry name" value="PYRUVATE DECARBOXYLASE"/>
    <property type="match status" value="1"/>
</dbReference>
<dbReference type="PANTHER" id="PTHR43452:SF3">
    <property type="entry name" value="TRANSAMINATED AMINO ACID DECARBOXYLASE"/>
    <property type="match status" value="1"/>
</dbReference>
<dbReference type="Pfam" id="PF02775">
    <property type="entry name" value="TPP_enzyme_C"/>
    <property type="match status" value="1"/>
</dbReference>
<dbReference type="Pfam" id="PF00205">
    <property type="entry name" value="TPP_enzyme_M"/>
    <property type="match status" value="1"/>
</dbReference>
<dbReference type="Pfam" id="PF02776">
    <property type="entry name" value="TPP_enzyme_N"/>
    <property type="match status" value="1"/>
</dbReference>
<dbReference type="PIRSF" id="PIRSF036565">
    <property type="entry name" value="Pyruvt_ip_decrb"/>
    <property type="match status" value="1"/>
</dbReference>
<dbReference type="SUPFAM" id="SSF52467">
    <property type="entry name" value="DHS-like NAD/FAD-binding domain"/>
    <property type="match status" value="1"/>
</dbReference>
<dbReference type="SUPFAM" id="SSF52518">
    <property type="entry name" value="Thiamin diphosphate-binding fold (THDP-binding)"/>
    <property type="match status" value="2"/>
</dbReference>
<accession>Q06408</accession>
<accession>D6VT13</accession>
<reference key="1">
    <citation type="journal article" date="1997" name="Nature">
        <title>The nucleotide sequence of Saccharomyces cerevisiae chromosome IV.</title>
        <authorList>
            <person name="Jacq C."/>
            <person name="Alt-Moerbe J."/>
            <person name="Andre B."/>
            <person name="Arnold W."/>
            <person name="Bahr A."/>
            <person name="Ballesta J.P.G."/>
            <person name="Bargues M."/>
            <person name="Baron L."/>
            <person name="Becker A."/>
            <person name="Biteau N."/>
            <person name="Bloecker H."/>
            <person name="Blugeon C."/>
            <person name="Boskovic J."/>
            <person name="Brandt P."/>
            <person name="Brueckner M."/>
            <person name="Buitrago M.J."/>
            <person name="Coster F."/>
            <person name="Delaveau T."/>
            <person name="del Rey F."/>
            <person name="Dujon B."/>
            <person name="Eide L.G."/>
            <person name="Garcia-Cantalejo J.M."/>
            <person name="Goffeau A."/>
            <person name="Gomez-Peris A."/>
            <person name="Granotier C."/>
            <person name="Hanemann V."/>
            <person name="Hankeln T."/>
            <person name="Hoheisel J.D."/>
            <person name="Jaeger W."/>
            <person name="Jimenez A."/>
            <person name="Jonniaux J.-L."/>
            <person name="Kraemer C."/>
            <person name="Kuester H."/>
            <person name="Laamanen P."/>
            <person name="Legros Y."/>
            <person name="Louis E.J."/>
            <person name="Moeller-Rieker S."/>
            <person name="Monnet A."/>
            <person name="Moro M."/>
            <person name="Mueller-Auer S."/>
            <person name="Nussbaumer B."/>
            <person name="Paricio N."/>
            <person name="Paulin L."/>
            <person name="Perea J."/>
            <person name="Perez-Alonso M."/>
            <person name="Perez-Ortin J.E."/>
            <person name="Pohl T.M."/>
            <person name="Prydz H."/>
            <person name="Purnelle B."/>
            <person name="Rasmussen S.W."/>
            <person name="Remacha M.A."/>
            <person name="Revuelta J.L."/>
            <person name="Rieger M."/>
            <person name="Salom D."/>
            <person name="Saluz H.P."/>
            <person name="Saiz J.E."/>
            <person name="Saren A.-M."/>
            <person name="Schaefer M."/>
            <person name="Scharfe M."/>
            <person name="Schmidt E.R."/>
            <person name="Schneider C."/>
            <person name="Scholler P."/>
            <person name="Schwarz S."/>
            <person name="Soler-Mira A."/>
            <person name="Urrestarazu L.A."/>
            <person name="Verhasselt P."/>
            <person name="Vissers S."/>
            <person name="Voet M."/>
            <person name="Volckaert G."/>
            <person name="Wagner G."/>
            <person name="Wambutt R."/>
            <person name="Wedler E."/>
            <person name="Wedler H."/>
            <person name="Woelfl S."/>
            <person name="Harris D.E."/>
            <person name="Bowman S."/>
            <person name="Brown D."/>
            <person name="Churcher C.M."/>
            <person name="Connor R."/>
            <person name="Dedman K."/>
            <person name="Gentles S."/>
            <person name="Hamlin N."/>
            <person name="Hunt S."/>
            <person name="Jones L."/>
            <person name="McDonald S."/>
            <person name="Murphy L.D."/>
            <person name="Niblett D."/>
            <person name="Odell C."/>
            <person name="Oliver K."/>
            <person name="Rajandream M.A."/>
            <person name="Richards C."/>
            <person name="Shore L."/>
            <person name="Walsh S.V."/>
            <person name="Barrell B.G."/>
            <person name="Dietrich F.S."/>
            <person name="Mulligan J.T."/>
            <person name="Allen E."/>
            <person name="Araujo R."/>
            <person name="Aviles E."/>
            <person name="Berno A."/>
            <person name="Carpenter J."/>
            <person name="Chen E."/>
            <person name="Cherry J.M."/>
            <person name="Chung E."/>
            <person name="Duncan M."/>
            <person name="Hunicke-Smith S."/>
            <person name="Hyman R.W."/>
            <person name="Komp C."/>
            <person name="Lashkari D."/>
            <person name="Lew H."/>
            <person name="Lin D."/>
            <person name="Mosedale D."/>
            <person name="Nakahara K."/>
            <person name="Namath A."/>
            <person name="Oefner P."/>
            <person name="Oh C."/>
            <person name="Petel F.X."/>
            <person name="Roberts D."/>
            <person name="Schramm S."/>
            <person name="Schroeder M."/>
            <person name="Shogren T."/>
            <person name="Shroff N."/>
            <person name="Winant A."/>
            <person name="Yelton M.A."/>
            <person name="Botstein D."/>
            <person name="Davis R.W."/>
            <person name="Johnston M."/>
            <person name="Andrews S."/>
            <person name="Brinkman R."/>
            <person name="Cooper J."/>
            <person name="Ding H."/>
            <person name="Du Z."/>
            <person name="Favello A."/>
            <person name="Fulton L."/>
            <person name="Gattung S."/>
            <person name="Greco T."/>
            <person name="Hallsworth K."/>
            <person name="Hawkins J."/>
            <person name="Hillier L.W."/>
            <person name="Jier M."/>
            <person name="Johnson D."/>
            <person name="Johnston L."/>
            <person name="Kirsten J."/>
            <person name="Kucaba T."/>
            <person name="Langston Y."/>
            <person name="Latreille P."/>
            <person name="Le T."/>
            <person name="Mardis E."/>
            <person name="Menezes S."/>
            <person name="Miller N."/>
            <person name="Nhan M."/>
            <person name="Pauley A."/>
            <person name="Peluso D."/>
            <person name="Rifkin L."/>
            <person name="Riles L."/>
            <person name="Taich A."/>
            <person name="Trevaskis E."/>
            <person name="Vignati D."/>
            <person name="Wilcox L."/>
            <person name="Wohldman P."/>
            <person name="Vaudin M."/>
            <person name="Wilson R."/>
            <person name="Waterston R."/>
            <person name="Albermann K."/>
            <person name="Hani J."/>
            <person name="Heumann K."/>
            <person name="Kleine K."/>
            <person name="Mewes H.-W."/>
            <person name="Zollner A."/>
            <person name="Zaccaria P."/>
        </authorList>
    </citation>
    <scope>NUCLEOTIDE SEQUENCE [LARGE SCALE GENOMIC DNA]</scope>
    <source>
        <strain>ATCC 204508 / S288c</strain>
    </source>
</reference>
<reference key="2">
    <citation type="journal article" date="2014" name="G3 (Bethesda)">
        <title>The reference genome sequence of Saccharomyces cerevisiae: Then and now.</title>
        <authorList>
            <person name="Engel S.R."/>
            <person name="Dietrich F.S."/>
            <person name="Fisk D.G."/>
            <person name="Binkley G."/>
            <person name="Balakrishnan R."/>
            <person name="Costanzo M.C."/>
            <person name="Dwight S.S."/>
            <person name="Hitz B.C."/>
            <person name="Karra K."/>
            <person name="Nash R.S."/>
            <person name="Weng S."/>
            <person name="Wong E.D."/>
            <person name="Lloyd P."/>
            <person name="Skrzypek M.S."/>
            <person name="Miyasato S.R."/>
            <person name="Simison M."/>
            <person name="Cherry J.M."/>
        </authorList>
    </citation>
    <scope>GENOME REANNOTATION</scope>
    <source>
        <strain>ATCC 204508 / S288c</strain>
    </source>
</reference>
<reference key="3">
    <citation type="journal article" date="2011" name="FEBS J.">
        <title>Characterization of a thiamin diphosphate-dependent phenylpyruvate decarboxylase from Saccharomyces cerevisiae.</title>
        <authorList>
            <person name="Kneen M.M."/>
            <person name="Stan R."/>
            <person name="Yep A."/>
            <person name="Tyler R.P."/>
            <person name="Saehuan C."/>
            <person name="McLeish M.J."/>
        </authorList>
    </citation>
    <scope>PROTEIN SEQUENCE OF 3-10</scope>
    <scope>FUNCTION</scope>
    <scope>CATALYTIC ACTIVITY</scope>
    <scope>BIOPHYSICOCHEMICAL PROPERTIES</scope>
</reference>
<reference key="4">
    <citation type="journal article" date="1999" name="Mol. Cell. Biol.">
        <title>Transcriptional induction by aromatic amino acids in Saccharomyces cerevisiae.</title>
        <authorList>
            <person name="Iraqui I."/>
            <person name="Vissers S."/>
            <person name="Andre B."/>
            <person name="Urrestarazu A."/>
        </authorList>
    </citation>
    <scope>FUNCTION</scope>
    <scope>REGULATION OF EXPRESSION</scope>
</reference>
<reference key="5">
    <citation type="journal article" date="2000" name="J. Biol. Chem.">
        <title>An investigation of the metabolism of isoleucine to active Amyl alcohol in Saccharomyces cerevisiae.</title>
        <authorList>
            <person name="Dickinson J.R."/>
            <person name="Harrison S.J."/>
            <person name="Dickinson J.A."/>
            <person name="Hewlins M.J."/>
        </authorList>
    </citation>
    <scope>ROLE IN ISOLEUCINE CATABOLISM</scope>
</reference>
<reference key="6">
    <citation type="journal article" date="2003" name="Appl. Environ. Microbiol.">
        <title>Identification and characterization of phenylpyruvate decarboxylase genes in Saccharomyces cerevisiae.</title>
        <authorList>
            <person name="Vuralhan Z."/>
            <person name="Morais M.A."/>
            <person name="Tai S.L."/>
            <person name="Piper M.D."/>
            <person name="Pronk J.T."/>
        </authorList>
    </citation>
    <scope>CHARACTERIZATION</scope>
</reference>
<reference key="7">
    <citation type="journal article" date="2003" name="J. Biol. Chem.">
        <title>The catabolism of amino acids to long chain and complex alcohols in Saccharomyces cerevisiae.</title>
        <authorList>
            <person name="Dickinson J.R."/>
            <person name="Salgado L.E."/>
            <person name="Hewlins M.J."/>
        </authorList>
    </citation>
    <scope>ROLE IN PHENYLALANINE; TRYPTOPHAN AND LEUCINE CATABOLISM</scope>
</reference>
<reference key="8">
    <citation type="journal article" date="2003" name="Nature">
        <title>Global analysis of protein localization in budding yeast.</title>
        <authorList>
            <person name="Huh W.-K."/>
            <person name="Falvo J.V."/>
            <person name="Gerke L.C."/>
            <person name="Carroll A.S."/>
            <person name="Howson R.W."/>
            <person name="Weissman J.S."/>
            <person name="O'Shea E.K."/>
        </authorList>
    </citation>
    <scope>SUBCELLULAR LOCATION [LARGE SCALE ANALYSIS]</scope>
</reference>
<reference key="9">
    <citation type="journal article" date="2003" name="Nature">
        <title>Global analysis of protein expression in yeast.</title>
        <authorList>
            <person name="Ghaemmaghami S."/>
            <person name="Huh W.-K."/>
            <person name="Bower K."/>
            <person name="Howson R.W."/>
            <person name="Belle A."/>
            <person name="Dephoure N."/>
            <person name="O'Shea E.K."/>
            <person name="Weissman J.S."/>
        </authorList>
    </citation>
    <scope>LEVEL OF PROTEIN EXPRESSION [LARGE SCALE ANALYSIS]</scope>
</reference>
<reference key="10">
    <citation type="journal article" date="2003" name="Nat. Biotechnol.">
        <title>A proteomics approach to understanding protein ubiquitination.</title>
        <authorList>
            <person name="Peng J."/>
            <person name="Schwartz D."/>
            <person name="Elias J.E."/>
            <person name="Thoreen C.C."/>
            <person name="Cheng D."/>
            <person name="Marsischky G."/>
            <person name="Roelofs J."/>
            <person name="Finley D."/>
            <person name="Gygi S.P."/>
        </authorList>
    </citation>
    <scope>UBIQUITINATION [LARGE SCALE ANALYSIS] AT LYS-588</scope>
    <scope>IDENTIFICATION BY MASS SPECTROMETRY</scope>
    <source>
        <strain>SUB592</strain>
    </source>
</reference>
<reference key="11">
    <citation type="journal article" date="2005" name="Appl. Environ. Microbiol.">
        <title>Physiological characterization of the ARO10-dependent, broad-substrate-specificity 2-oxo acid decarboxylase activity of Saccharomyces cerevisiae.</title>
        <authorList>
            <person name="Vuralhan Z."/>
            <person name="Luttik M.A."/>
            <person name="Tai S.L."/>
            <person name="Boer V.M."/>
            <person name="Morais M.A."/>
            <person name="Schipper D."/>
            <person name="Almering M.J."/>
            <person name="Koetter P."/>
            <person name="Dickinson J.R."/>
            <person name="Daran J.M."/>
            <person name="Pronk J.T."/>
        </authorList>
    </citation>
    <scope>FUNCTION</scope>
    <scope>CATALYTIC ACTIVITY</scope>
    <source>
        <strain>CEN.PK113-7D</strain>
    </source>
</reference>
<reference key="12">
    <citation type="journal article" date="2012" name="Appl. Environ. Microbiol.">
        <title>Substrate specificity of thiamine pyrophosphate-dependent 2-oxo-acid decarboxylases in Saccharomyces cerevisiae.</title>
        <authorList>
            <person name="Romagnoli G."/>
            <person name="Luttik M.A."/>
            <person name="Koetter P."/>
            <person name="Pronk J.T."/>
            <person name="Daran J.M."/>
        </authorList>
    </citation>
    <scope>CATALYTIC ACTIVITY</scope>
    <scope>BIOPHYSICOCHEMICAL PROPERTIES</scope>
</reference>
<reference key="13">
    <citation type="journal article" date="2012" name="Proc. Natl. Acad. Sci. U.S.A.">
        <title>N-terminal acetylome analyses and functional insights of the N-terminal acetyltransferase NatB.</title>
        <authorList>
            <person name="Van Damme P."/>
            <person name="Lasa M."/>
            <person name="Polevoda B."/>
            <person name="Gazquez C."/>
            <person name="Elosegui-Artola A."/>
            <person name="Kim D.S."/>
            <person name="De Juan-Pardo E."/>
            <person name="Demeyer K."/>
            <person name="Hole K."/>
            <person name="Larrea E."/>
            <person name="Timmerman E."/>
            <person name="Prieto J."/>
            <person name="Arnesen T."/>
            <person name="Sherman F."/>
            <person name="Gevaert K."/>
            <person name="Aldabe R."/>
        </authorList>
    </citation>
    <scope>IDENTIFICATION BY MASS SPECTROMETRY [LARGE SCALE ANALYSIS]</scope>
</reference>
<proteinExistence type="evidence at protein level"/>
<evidence type="ECO:0000250" key="1"/>
<evidence type="ECO:0000269" key="2">
    <source>
    </source>
</evidence>
<evidence type="ECO:0000269" key="3">
    <source>
    </source>
</evidence>
<evidence type="ECO:0000269" key="4">
    <source>
    </source>
</evidence>
<evidence type="ECO:0000269" key="5">
    <source>
    </source>
</evidence>
<evidence type="ECO:0000269" key="6">
    <source>
    </source>
</evidence>
<evidence type="ECO:0000269" key="7">
    <source>
    </source>
</evidence>
<evidence type="ECO:0000269" key="8">
    <source>
    </source>
</evidence>
<evidence type="ECO:0000269" key="9">
    <source>
    </source>
</evidence>
<evidence type="ECO:0000269" key="10">
    <source>
    </source>
</evidence>
<evidence type="ECO:0000303" key="11">
    <source>
    </source>
</evidence>
<evidence type="ECO:0000305" key="12"/>
<comment type="function">
    <text evidence="2 3 4 8 9">One of five 2-oxo acid decarboxylases (PDC1, PDC5, PDC6, ARO10, and THI3) involved in amino acid catabolism. The enzyme catalyzes the decarboxylation of amino acids, which, in a first step, have been transaminated to the corresponding 2-oxo acids (alpha-keto-acids). In a third step, the resulting aldehydes are reduced to alcohols, collectively referred to as fusel oils or alcohols. Its preferred substrates are the transaminated amino acids derived from phenylalanine (phenylpyruvate), tryptophan (3-(indol-3-yl)pyruvate), and probably tyrosine (4-hydroxyphenylpyruvate), but also isoleucine ((3S)-3-methyl-2-oxopentanoate, also alpha-keto-beta-methylvalerate) and methionine (4-methylthio-2-oxobutanoate), whereas transaminated leucine (4-methyl-2-oxopentanoate, also alpha-keto-isocaproate) is a low efficiency substrate and transaminated valine and pyruvate are no substrates. In analogy to the pyruvate decarboxylases the enzyme may in a side-reaction catalyze condensation (or carboligation) reactions leading to the formation of 2-hydroxy ketone, collectively called acyloins.</text>
</comment>
<comment type="catalytic activity">
    <reaction evidence="4">
        <text>4-methyl-2-oxopentanoate + H(+) = 3-methylbutanal + CO2</text>
        <dbReference type="Rhea" id="RHEA:54360"/>
        <dbReference type="ChEBI" id="CHEBI:15378"/>
        <dbReference type="ChEBI" id="CHEBI:16526"/>
        <dbReference type="ChEBI" id="CHEBI:16638"/>
        <dbReference type="ChEBI" id="CHEBI:17865"/>
        <dbReference type="EC" id="4.1.1.72"/>
    </reaction>
</comment>
<comment type="catalytic activity">
    <reaction evidence="3">
        <text>(S)-3-methyl-2-oxopentanoate + H(+) = 2-methylbutanal + CO2</text>
        <dbReference type="Rhea" id="RHEA:21108"/>
        <dbReference type="ChEBI" id="CHEBI:15378"/>
        <dbReference type="ChEBI" id="CHEBI:16182"/>
        <dbReference type="ChEBI" id="CHEBI:16526"/>
        <dbReference type="ChEBI" id="CHEBI:35146"/>
        <dbReference type="EC" id="4.1.1.72"/>
    </reaction>
</comment>
<comment type="catalytic activity">
    <reaction evidence="4 9">
        <text>indole-3-pyruvate + H(+) = indole-3-acetaldehyde + CO2</text>
        <dbReference type="Rhea" id="RHEA:18017"/>
        <dbReference type="ChEBI" id="CHEBI:15378"/>
        <dbReference type="ChEBI" id="CHEBI:16526"/>
        <dbReference type="ChEBI" id="CHEBI:17640"/>
        <dbReference type="ChEBI" id="CHEBI:18086"/>
        <dbReference type="EC" id="4.1.1.74"/>
    </reaction>
</comment>
<comment type="catalytic activity">
    <reaction evidence="4 9">
        <text>3-phenylpyruvate + H(+) = 2-phenylacetaldehyde + CO2</text>
        <dbReference type="Rhea" id="RHEA:14185"/>
        <dbReference type="ChEBI" id="CHEBI:15378"/>
        <dbReference type="ChEBI" id="CHEBI:16424"/>
        <dbReference type="ChEBI" id="CHEBI:16526"/>
        <dbReference type="ChEBI" id="CHEBI:18005"/>
        <dbReference type="EC" id="4.1.1.43"/>
    </reaction>
</comment>
<comment type="catalytic activity">
    <reaction evidence="8 9">
        <text>4-methylsulfanyl-2-oxobutanoate + H(+) = 3-methylsulfanylpropanal + CO2</text>
        <dbReference type="Rhea" id="RHEA:55076"/>
        <dbReference type="ChEBI" id="CHEBI:15378"/>
        <dbReference type="ChEBI" id="CHEBI:16526"/>
        <dbReference type="ChEBI" id="CHEBI:16723"/>
        <dbReference type="ChEBI" id="CHEBI:49017"/>
    </reaction>
</comment>
<comment type="catalytic activity">
    <reaction evidence="9">
        <text>3-(4-hydroxyphenyl)pyruvate + H(+) = (4-hydroxyphenyl)acetaldehyde + CO2</text>
        <dbReference type="Rhea" id="RHEA:18697"/>
        <dbReference type="ChEBI" id="CHEBI:15378"/>
        <dbReference type="ChEBI" id="CHEBI:15621"/>
        <dbReference type="ChEBI" id="CHEBI:16526"/>
        <dbReference type="ChEBI" id="CHEBI:36242"/>
        <dbReference type="EC" id="4.1.1.80"/>
    </reaction>
</comment>
<comment type="cofactor">
    <cofactor evidence="1">
        <name>Mg(2+)</name>
        <dbReference type="ChEBI" id="CHEBI:18420"/>
    </cofactor>
    <text evidence="1">Binds 1 Mg(2+) per subunit.</text>
</comment>
<comment type="cofactor">
    <cofactor evidence="1">
        <name>thiamine diphosphate</name>
        <dbReference type="ChEBI" id="CHEBI:58937"/>
    </cofactor>
    <text evidence="1">Binds 1 thiamine pyrophosphate per subunit.</text>
</comment>
<comment type="biophysicochemical properties">
    <kinetics>
        <KM evidence="10">0.14 mM for phenylpyruvate</KM>
        <KM evidence="10">12 mM for 3-methyl-2-oxobutanoate</KM>
        <KM evidence="10">2.1 mM for 4-methyl-2-oxopentanoate</KM>
        <KM evidence="10">4.7 mM for 3-methyl-2-oxopentanoate</KM>
        <KM evidence="10">5.36 mM for 4-methylthio-2-oxobutanoate</KM>
        <KM evidence="9">0.03 mM for 3-(indol-3-yl)pyruvate</KM>
        <KM evidence="9">0.09 mM for 4-hydroxyphenylpyruvate</KM>
        <Vmax evidence="10">201.0 umol/min/mg enzyme for phenylpyruvate</Vmax>
        <Vmax evidence="10">103.0 umol/min/mg enzyme for 3-methyl-2-oxobutanoate</Vmax>
        <Vmax evidence="10">103.0 umol/min/mg enzyme for 4-methyl-2-oxopentanoate</Vmax>
        <Vmax evidence="10">103.0 umol/min/mg enzyme for 3-methyl-2-oxopentanoate</Vmax>
        <Vmax evidence="10">85.0 umol/min/mg enzyme for 4-methylthio-2-oxobutanoate</Vmax>
    </kinetics>
    <phDependence>
        <text evidence="9">Optimum pH is 6.5-7.0.</text>
    </phDependence>
</comment>
<comment type="pathway">
    <text>Amino-acid degradation; Ehrlich pathway.</text>
</comment>
<comment type="subcellular location">
    <subcellularLocation>
        <location evidence="6">Cytoplasm</location>
    </subcellularLocation>
</comment>
<comment type="induction">
    <text>Expression is induced by the presence of aromatic amino acids and the lack of preferred nitrogen sources (e.g. ammonia, glutamine) and requires the transcription activator ARO80.</text>
</comment>
<comment type="biotechnology">
    <text>Fusel oils are important flavor and aroma compounds in yeast-fermented products contributing to the quality of beverages and food. In low concentration they are generally desirable, whereas high concentrations may spoil the product. By adjusting growth conditions and substrate their production is sought to be influenced. Phenylethanol, having a rose-like aroma, is an important fragrance in the cosmetic industry and can be produced by fermentation.</text>
</comment>
<comment type="miscellaneous">
    <text evidence="7">Present with 6560 molecules/cell in log phase SD medium.</text>
</comment>
<comment type="similarity">
    <text evidence="12">Belongs to the TPP enzyme family.</text>
</comment>
<keyword id="KW-0101">Branched-chain amino acid catabolism</keyword>
<keyword id="KW-0963">Cytoplasm</keyword>
<keyword id="KW-0210">Decarboxylase</keyword>
<keyword id="KW-0903">Direct protein sequencing</keyword>
<keyword id="KW-1017">Isopeptide bond</keyword>
<keyword id="KW-0456">Lyase</keyword>
<keyword id="KW-0460">Magnesium</keyword>
<keyword id="KW-0479">Metal-binding</keyword>
<keyword id="KW-0585">Phenylalanine catabolism</keyword>
<keyword id="KW-1185">Reference proteome</keyword>
<keyword id="KW-0786">Thiamine pyrophosphate</keyword>
<keyword id="KW-0823">Tryptophan catabolism</keyword>
<keyword id="KW-0828">Tyrosine catabolism</keyword>
<keyword id="KW-0832">Ubl conjugation</keyword>
<sequence length="635" mass="71384">MAPVTIEKFVNQEERHLVSNRSATIPFGEYIFKRLLSIDTKSVFGVPGDFNLSLLEYLYSPSVESAGLRWVGTCNELNAAYAADGYSRYSNKIGCLITTYGVGELSALNGIAGSFAENVKVLHIVGVAKSIDSRSSNFSDRNLHHLVPQLHDSNFKGPNHKVYHDMVKDRVACSVAYLEDIETACDQVDNVIRDIYKYSKPGYIFVPADFADMSVTCDNLVNVPRISQQDCIVYPSENQLSDIINKITSWIYSSKTPAILGDVLTDRYGVSNFLNKLICKTGIWNFSTVMGKSVIDESNPTYMGQYNGKEGLKQVYEHFELCDLVLHFGVDINEINNGHYTFTYKPNAKIIQFHPNYIRLVDTRQGNEQMFKGINFAPILKELYKRIDVSKLSLQYDSNVTQYTNETMRLEDPTNGQSSIITQVHLQKTMPKFLNPGDVVVCETGSFQFSVRDFAFPSQLKYISQGFFLSIGMALPAALGVGIAMQDHSNAHINGGNVKEDYKPRLILFEGDGAAQMTIQELSTILKCNIPLEVIIWNNNGYTIERAIMGPTRSYNDVMSWKWTKLFEAFGDFDGKYTNSTLIQCPSKLALKLEELKNSNKRSGIELLEVKLGELDFPEQLKCMVEAAALKRNKK</sequence>
<organism>
    <name type="scientific">Saccharomyces cerevisiae (strain ATCC 204508 / S288c)</name>
    <name type="common">Baker's yeast</name>
    <dbReference type="NCBI Taxonomy" id="559292"/>
    <lineage>
        <taxon>Eukaryota</taxon>
        <taxon>Fungi</taxon>
        <taxon>Dikarya</taxon>
        <taxon>Ascomycota</taxon>
        <taxon>Saccharomycotina</taxon>
        <taxon>Saccharomycetes</taxon>
        <taxon>Saccharomycetales</taxon>
        <taxon>Saccharomycetaceae</taxon>
        <taxon>Saccharomyces</taxon>
    </lineage>
</organism>
<gene>
    <name type="primary">ARO10</name>
    <name type="ordered locus">YDR380W</name>
    <name type="ORF">D9481.3</name>
</gene>
<feature type="chain" id="PRO_0000090835" description="Transaminated amino acid decarboxylase">
    <location>
        <begin position="1"/>
        <end position="635"/>
    </location>
</feature>
<feature type="cross-link" description="Glycyl lysine isopeptide (Lys-Gly) (interchain with G-Cter in ubiquitin)" evidence="5">
    <location>
        <position position="588"/>
    </location>
</feature>